<keyword id="KW-0456">Lyase</keyword>
<keyword id="KW-0663">Pyridoxal phosphate</keyword>
<keyword id="KW-0704">Schiff base</keyword>
<accession>Q8CQV7</accession>
<proteinExistence type="inferred from homology"/>
<gene>
    <name evidence="1" type="primary">pdxS</name>
    <name type="ordered locus">SE_2262</name>
</gene>
<sequence>MSKIVGSDRVKRGMAEMQKGGVIMDVVNAEQAKIAEEAGAVAVMALERVPSDIRAAGGVARMANPKIVEEVMNAVSIPVMAKARIGHITEARVLESMGVDYIDESEVLTPADEEYHLRKDQFTVPFVCGCRNLGEAARRIGEGAAMLRTKGEPGTGNIVEAVRHMRRVNSEVSRLTVMNDDEIMTFAKDLGAPYEVLKQIKDNGRLPVVNFAAGGVATPQDAALMMELGADGVFVGSGIFKSEDPEKFAKAIVQATTHYQDYELIGKLASELGTAMKGLDINQISLEERMQERGW</sequence>
<evidence type="ECO:0000255" key="1">
    <source>
        <dbReference type="HAMAP-Rule" id="MF_01824"/>
    </source>
</evidence>
<protein>
    <recommendedName>
        <fullName evidence="1">Pyridoxal 5'-phosphate synthase subunit PdxS</fullName>
        <shortName evidence="1">PLP synthase subunit PdxS</shortName>
        <ecNumber evidence="1">4.3.3.6</ecNumber>
    </recommendedName>
    <alternativeName>
        <fullName evidence="1">Pdx1</fullName>
    </alternativeName>
</protein>
<comment type="function">
    <text evidence="1">Catalyzes the formation of pyridoxal 5'-phosphate from ribose 5-phosphate (RBP), glyceraldehyde 3-phosphate (G3P) and ammonia. The ammonia is provided by the PdxT subunit. Can also use ribulose 5-phosphate and dihydroxyacetone phosphate as substrates, resulting from enzyme-catalyzed isomerization of RBP and G3P, respectively.</text>
</comment>
<comment type="catalytic activity">
    <reaction evidence="1">
        <text>aldehydo-D-ribose 5-phosphate + D-glyceraldehyde 3-phosphate + L-glutamine = pyridoxal 5'-phosphate + L-glutamate + phosphate + 3 H2O + H(+)</text>
        <dbReference type="Rhea" id="RHEA:31507"/>
        <dbReference type="ChEBI" id="CHEBI:15377"/>
        <dbReference type="ChEBI" id="CHEBI:15378"/>
        <dbReference type="ChEBI" id="CHEBI:29985"/>
        <dbReference type="ChEBI" id="CHEBI:43474"/>
        <dbReference type="ChEBI" id="CHEBI:58273"/>
        <dbReference type="ChEBI" id="CHEBI:58359"/>
        <dbReference type="ChEBI" id="CHEBI:59776"/>
        <dbReference type="ChEBI" id="CHEBI:597326"/>
        <dbReference type="EC" id="4.3.3.6"/>
    </reaction>
</comment>
<comment type="pathway">
    <text evidence="1">Cofactor biosynthesis; pyridoxal 5'-phosphate biosynthesis.</text>
</comment>
<comment type="subunit">
    <text evidence="1">In the presence of PdxT, forms a dodecamer of heterodimers.</text>
</comment>
<comment type="similarity">
    <text evidence="1">Belongs to the PdxS/SNZ family.</text>
</comment>
<name>PDXS_STAES</name>
<organism>
    <name type="scientific">Staphylococcus epidermidis (strain ATCC 12228 / FDA PCI 1200)</name>
    <dbReference type="NCBI Taxonomy" id="176280"/>
    <lineage>
        <taxon>Bacteria</taxon>
        <taxon>Bacillati</taxon>
        <taxon>Bacillota</taxon>
        <taxon>Bacilli</taxon>
        <taxon>Bacillales</taxon>
        <taxon>Staphylococcaceae</taxon>
        <taxon>Staphylococcus</taxon>
    </lineage>
</organism>
<dbReference type="EC" id="4.3.3.6" evidence="1"/>
<dbReference type="EMBL" id="AE015929">
    <property type="protein sequence ID" value="AAO05904.1"/>
    <property type="molecule type" value="Genomic_DNA"/>
</dbReference>
<dbReference type="RefSeq" id="NP_765817.1">
    <property type="nucleotide sequence ID" value="NC_004461.1"/>
</dbReference>
<dbReference type="RefSeq" id="WP_001830030.1">
    <property type="nucleotide sequence ID" value="NZ_WBME01000092.1"/>
</dbReference>
<dbReference type="SMR" id="Q8CQV7"/>
<dbReference type="GeneID" id="50019554"/>
<dbReference type="KEGG" id="sep:SE_2262"/>
<dbReference type="PATRIC" id="fig|176280.10.peg.2207"/>
<dbReference type="eggNOG" id="COG0214">
    <property type="taxonomic scope" value="Bacteria"/>
</dbReference>
<dbReference type="HOGENOM" id="CLU_055352_1_0_9"/>
<dbReference type="OrthoDB" id="9772545at2"/>
<dbReference type="UniPathway" id="UPA00245"/>
<dbReference type="Proteomes" id="UP000001411">
    <property type="component" value="Chromosome"/>
</dbReference>
<dbReference type="GO" id="GO:0036381">
    <property type="term" value="F:pyridoxal 5'-phosphate synthase (glutamine hydrolysing) activity"/>
    <property type="evidence" value="ECO:0007669"/>
    <property type="project" value="UniProtKB-UniRule"/>
</dbReference>
<dbReference type="GO" id="GO:0006520">
    <property type="term" value="P:amino acid metabolic process"/>
    <property type="evidence" value="ECO:0007669"/>
    <property type="project" value="TreeGrafter"/>
</dbReference>
<dbReference type="GO" id="GO:0042823">
    <property type="term" value="P:pyridoxal phosphate biosynthetic process"/>
    <property type="evidence" value="ECO:0007669"/>
    <property type="project" value="UniProtKB-UniRule"/>
</dbReference>
<dbReference type="GO" id="GO:0008615">
    <property type="term" value="P:pyridoxine biosynthetic process"/>
    <property type="evidence" value="ECO:0007669"/>
    <property type="project" value="TreeGrafter"/>
</dbReference>
<dbReference type="CDD" id="cd04727">
    <property type="entry name" value="pdxS"/>
    <property type="match status" value="1"/>
</dbReference>
<dbReference type="FunFam" id="3.20.20.70:FF:000001">
    <property type="entry name" value="Pyridoxine biosynthesis protein PDX1"/>
    <property type="match status" value="1"/>
</dbReference>
<dbReference type="Gene3D" id="3.20.20.70">
    <property type="entry name" value="Aldolase class I"/>
    <property type="match status" value="1"/>
</dbReference>
<dbReference type="HAMAP" id="MF_01824">
    <property type="entry name" value="PdxS"/>
    <property type="match status" value="1"/>
</dbReference>
<dbReference type="InterPro" id="IPR013785">
    <property type="entry name" value="Aldolase_TIM"/>
</dbReference>
<dbReference type="InterPro" id="IPR001852">
    <property type="entry name" value="PdxS/SNZ"/>
</dbReference>
<dbReference type="InterPro" id="IPR033755">
    <property type="entry name" value="PdxS/SNZ_N"/>
</dbReference>
<dbReference type="InterPro" id="IPR011060">
    <property type="entry name" value="RibuloseP-bd_barrel"/>
</dbReference>
<dbReference type="NCBIfam" id="NF003215">
    <property type="entry name" value="PRK04180.1"/>
    <property type="match status" value="1"/>
</dbReference>
<dbReference type="NCBIfam" id="TIGR00343">
    <property type="entry name" value="pyridoxal 5'-phosphate synthase lyase subunit PdxS"/>
    <property type="match status" value="1"/>
</dbReference>
<dbReference type="PANTHER" id="PTHR31829">
    <property type="entry name" value="PYRIDOXAL 5'-PHOSPHATE SYNTHASE SUBUNIT SNZ1-RELATED"/>
    <property type="match status" value="1"/>
</dbReference>
<dbReference type="PANTHER" id="PTHR31829:SF0">
    <property type="entry name" value="PYRIDOXAL 5'-PHOSPHATE SYNTHASE SUBUNIT SNZ1-RELATED"/>
    <property type="match status" value="1"/>
</dbReference>
<dbReference type="Pfam" id="PF01680">
    <property type="entry name" value="SOR_SNZ"/>
    <property type="match status" value="1"/>
</dbReference>
<dbReference type="PIRSF" id="PIRSF029271">
    <property type="entry name" value="Pdx1"/>
    <property type="match status" value="1"/>
</dbReference>
<dbReference type="SUPFAM" id="SSF51366">
    <property type="entry name" value="Ribulose-phoshate binding barrel"/>
    <property type="match status" value="1"/>
</dbReference>
<dbReference type="PROSITE" id="PS01235">
    <property type="entry name" value="PDXS_SNZ_1"/>
    <property type="match status" value="1"/>
</dbReference>
<dbReference type="PROSITE" id="PS51129">
    <property type="entry name" value="PDXS_SNZ_2"/>
    <property type="match status" value="1"/>
</dbReference>
<reference key="1">
    <citation type="journal article" date="2003" name="Mol. Microbiol.">
        <title>Genome-based analysis of virulence genes in a non-biofilm-forming Staphylococcus epidermidis strain (ATCC 12228).</title>
        <authorList>
            <person name="Zhang Y.-Q."/>
            <person name="Ren S.-X."/>
            <person name="Li H.-L."/>
            <person name="Wang Y.-X."/>
            <person name="Fu G."/>
            <person name="Yang J."/>
            <person name="Qin Z.-Q."/>
            <person name="Miao Y.-G."/>
            <person name="Wang W.-Y."/>
            <person name="Chen R.-S."/>
            <person name="Shen Y."/>
            <person name="Chen Z."/>
            <person name="Yuan Z.-H."/>
            <person name="Zhao G.-P."/>
            <person name="Qu D."/>
            <person name="Danchin A."/>
            <person name="Wen Y.-M."/>
        </authorList>
    </citation>
    <scope>NUCLEOTIDE SEQUENCE [LARGE SCALE GENOMIC DNA]</scope>
    <source>
        <strain>ATCC 12228 / FDA PCI 1200</strain>
    </source>
</reference>
<feature type="chain" id="PRO_0000109417" description="Pyridoxal 5'-phosphate synthase subunit PdxS">
    <location>
        <begin position="1"/>
        <end position="295"/>
    </location>
</feature>
<feature type="active site" description="Schiff-base intermediate with D-ribose 5-phosphate" evidence="1">
    <location>
        <position position="82"/>
    </location>
</feature>
<feature type="binding site" evidence="1">
    <location>
        <position position="25"/>
    </location>
    <ligand>
        <name>D-ribose 5-phosphate</name>
        <dbReference type="ChEBI" id="CHEBI:78346"/>
    </ligand>
</feature>
<feature type="binding site" evidence="1">
    <location>
        <position position="154"/>
    </location>
    <ligand>
        <name>D-ribose 5-phosphate</name>
        <dbReference type="ChEBI" id="CHEBI:78346"/>
    </ligand>
</feature>
<feature type="binding site" evidence="1">
    <location>
        <position position="166"/>
    </location>
    <ligand>
        <name>D-glyceraldehyde 3-phosphate</name>
        <dbReference type="ChEBI" id="CHEBI:59776"/>
    </ligand>
</feature>
<feature type="binding site" evidence="1">
    <location>
        <position position="215"/>
    </location>
    <ligand>
        <name>D-ribose 5-phosphate</name>
        <dbReference type="ChEBI" id="CHEBI:78346"/>
    </ligand>
</feature>
<feature type="binding site" evidence="1">
    <location>
        <begin position="236"/>
        <end position="237"/>
    </location>
    <ligand>
        <name>D-ribose 5-phosphate</name>
        <dbReference type="ChEBI" id="CHEBI:78346"/>
    </ligand>
</feature>